<gene>
    <name evidence="1" type="primary">ureG</name>
    <name type="ordered locus">PA4893</name>
</gene>
<keyword id="KW-0143">Chaperone</keyword>
<keyword id="KW-0963">Cytoplasm</keyword>
<keyword id="KW-0342">GTP-binding</keyword>
<keyword id="KW-0996">Nickel insertion</keyword>
<keyword id="KW-0547">Nucleotide-binding</keyword>
<keyword id="KW-1185">Reference proteome</keyword>
<comment type="function">
    <text evidence="1">Facilitates the functional incorporation of the urease nickel metallocenter. This process requires GTP hydrolysis, probably effectuated by UreG.</text>
</comment>
<comment type="subunit">
    <text evidence="1">Homodimer. UreD, UreF and UreG form a complex that acts as a GTP-hydrolysis-dependent molecular chaperone, activating the urease apoprotein by helping to assemble the nickel containing metallocenter of UreC. The UreE protein probably delivers the nickel.</text>
</comment>
<comment type="subcellular location">
    <subcellularLocation>
        <location evidence="1">Cytoplasm</location>
    </subcellularLocation>
</comment>
<comment type="similarity">
    <text evidence="1">Belongs to the SIMIBI class G3E GTPase family. UreG subfamily.</text>
</comment>
<proteinExistence type="inferred from homology"/>
<dbReference type="EMBL" id="AE004091">
    <property type="protein sequence ID" value="AAG08278.1"/>
    <property type="molecule type" value="Genomic_DNA"/>
</dbReference>
<dbReference type="PIR" id="G83034">
    <property type="entry name" value="G83034"/>
</dbReference>
<dbReference type="RefSeq" id="NP_253580.1">
    <property type="nucleotide sequence ID" value="NC_002516.2"/>
</dbReference>
<dbReference type="RefSeq" id="WP_003095530.1">
    <property type="nucleotide sequence ID" value="NZ_QZGE01000002.1"/>
</dbReference>
<dbReference type="SMR" id="Q9HUS0"/>
<dbReference type="FunCoup" id="Q9HUS0">
    <property type="interactions" value="31"/>
</dbReference>
<dbReference type="STRING" id="208964.PA4893"/>
<dbReference type="PaxDb" id="208964-PA4893"/>
<dbReference type="DNASU" id="878632"/>
<dbReference type="GeneID" id="878632"/>
<dbReference type="KEGG" id="pae:PA4893"/>
<dbReference type="PATRIC" id="fig|208964.12.peg.5126"/>
<dbReference type="PseudoCAP" id="PA4893"/>
<dbReference type="HOGENOM" id="CLU_072144_1_0_6"/>
<dbReference type="InParanoid" id="Q9HUS0"/>
<dbReference type="OrthoDB" id="9802035at2"/>
<dbReference type="PhylomeDB" id="Q9HUS0"/>
<dbReference type="BioCyc" id="PAER208964:G1FZ6-5007-MONOMER"/>
<dbReference type="Proteomes" id="UP000002438">
    <property type="component" value="Chromosome"/>
</dbReference>
<dbReference type="GO" id="GO:0005737">
    <property type="term" value="C:cytoplasm"/>
    <property type="evidence" value="ECO:0007669"/>
    <property type="project" value="UniProtKB-SubCell"/>
</dbReference>
<dbReference type="GO" id="GO:0016887">
    <property type="term" value="F:ATP hydrolysis activity"/>
    <property type="evidence" value="ECO:0007669"/>
    <property type="project" value="InterPro"/>
</dbReference>
<dbReference type="GO" id="GO:0005525">
    <property type="term" value="F:GTP binding"/>
    <property type="evidence" value="ECO:0007669"/>
    <property type="project" value="UniProtKB-KW"/>
</dbReference>
<dbReference type="GO" id="GO:0003924">
    <property type="term" value="F:GTPase activity"/>
    <property type="evidence" value="ECO:0000250"/>
    <property type="project" value="PseudoCAP"/>
</dbReference>
<dbReference type="GO" id="GO:0016151">
    <property type="term" value="F:nickel cation binding"/>
    <property type="evidence" value="ECO:0007669"/>
    <property type="project" value="UniProtKB-UniRule"/>
</dbReference>
<dbReference type="GO" id="GO:0008270">
    <property type="term" value="F:zinc ion binding"/>
    <property type="evidence" value="ECO:0000250"/>
    <property type="project" value="PseudoCAP"/>
</dbReference>
<dbReference type="GO" id="GO:0043419">
    <property type="term" value="P:urea catabolic process"/>
    <property type="evidence" value="ECO:0007669"/>
    <property type="project" value="InterPro"/>
</dbReference>
<dbReference type="CDD" id="cd05540">
    <property type="entry name" value="UreG"/>
    <property type="match status" value="1"/>
</dbReference>
<dbReference type="FunFam" id="3.40.50.300:FF:000208">
    <property type="entry name" value="Urease accessory protein UreG"/>
    <property type="match status" value="1"/>
</dbReference>
<dbReference type="Gene3D" id="3.40.50.300">
    <property type="entry name" value="P-loop containing nucleotide triphosphate hydrolases"/>
    <property type="match status" value="1"/>
</dbReference>
<dbReference type="HAMAP" id="MF_01389">
    <property type="entry name" value="UreG"/>
    <property type="match status" value="1"/>
</dbReference>
<dbReference type="InterPro" id="IPR003593">
    <property type="entry name" value="AAA+_ATPase"/>
</dbReference>
<dbReference type="InterPro" id="IPR003495">
    <property type="entry name" value="CobW/HypB/UreG_nucleotide-bd"/>
</dbReference>
<dbReference type="InterPro" id="IPR027417">
    <property type="entry name" value="P-loop_NTPase"/>
</dbReference>
<dbReference type="InterPro" id="IPR004400">
    <property type="entry name" value="UreG"/>
</dbReference>
<dbReference type="NCBIfam" id="TIGR00101">
    <property type="entry name" value="ureG"/>
    <property type="match status" value="1"/>
</dbReference>
<dbReference type="PANTHER" id="PTHR31715">
    <property type="entry name" value="UREASE ACCESSORY PROTEIN G"/>
    <property type="match status" value="1"/>
</dbReference>
<dbReference type="PANTHER" id="PTHR31715:SF0">
    <property type="entry name" value="UREASE ACCESSORY PROTEIN G"/>
    <property type="match status" value="1"/>
</dbReference>
<dbReference type="Pfam" id="PF02492">
    <property type="entry name" value="cobW"/>
    <property type="match status" value="1"/>
</dbReference>
<dbReference type="PIRSF" id="PIRSF005624">
    <property type="entry name" value="Ni-bind_GTPase"/>
    <property type="match status" value="1"/>
</dbReference>
<dbReference type="SMART" id="SM00382">
    <property type="entry name" value="AAA"/>
    <property type="match status" value="1"/>
</dbReference>
<dbReference type="SUPFAM" id="SSF52540">
    <property type="entry name" value="P-loop containing nucleoside triphosphate hydrolases"/>
    <property type="match status" value="1"/>
</dbReference>
<accession>Q9HUS0</accession>
<protein>
    <recommendedName>
        <fullName evidence="1">Urease accessory protein UreG</fullName>
    </recommendedName>
</protein>
<reference key="1">
    <citation type="journal article" date="2000" name="Nature">
        <title>Complete genome sequence of Pseudomonas aeruginosa PAO1, an opportunistic pathogen.</title>
        <authorList>
            <person name="Stover C.K."/>
            <person name="Pham X.-Q.T."/>
            <person name="Erwin A.L."/>
            <person name="Mizoguchi S.D."/>
            <person name="Warrener P."/>
            <person name="Hickey M.J."/>
            <person name="Brinkman F.S.L."/>
            <person name="Hufnagle W.O."/>
            <person name="Kowalik D.J."/>
            <person name="Lagrou M."/>
            <person name="Garber R.L."/>
            <person name="Goltry L."/>
            <person name="Tolentino E."/>
            <person name="Westbrock-Wadman S."/>
            <person name="Yuan Y."/>
            <person name="Brody L.L."/>
            <person name="Coulter S.N."/>
            <person name="Folger K.R."/>
            <person name="Kas A."/>
            <person name="Larbig K."/>
            <person name="Lim R.M."/>
            <person name="Smith K.A."/>
            <person name="Spencer D.H."/>
            <person name="Wong G.K.-S."/>
            <person name="Wu Z."/>
            <person name="Paulsen I.T."/>
            <person name="Reizer J."/>
            <person name="Saier M.H. Jr."/>
            <person name="Hancock R.E.W."/>
            <person name="Lory S."/>
            <person name="Olson M.V."/>
        </authorList>
    </citation>
    <scope>NUCLEOTIDE SEQUENCE [LARGE SCALE GENOMIC DNA]</scope>
    <source>
        <strain>ATCC 15692 / DSM 22644 / CIP 104116 / JCM 14847 / LMG 12228 / 1C / PRS 101 / PAO1</strain>
    </source>
</reference>
<name>UREG_PSEAE</name>
<organism>
    <name type="scientific">Pseudomonas aeruginosa (strain ATCC 15692 / DSM 22644 / CIP 104116 / JCM 14847 / LMG 12228 / 1C / PRS 101 / PAO1)</name>
    <dbReference type="NCBI Taxonomy" id="208964"/>
    <lineage>
        <taxon>Bacteria</taxon>
        <taxon>Pseudomonadati</taxon>
        <taxon>Pseudomonadota</taxon>
        <taxon>Gammaproteobacteria</taxon>
        <taxon>Pseudomonadales</taxon>
        <taxon>Pseudomonadaceae</taxon>
        <taxon>Pseudomonas</taxon>
    </lineage>
</organism>
<feature type="chain" id="PRO_0000287732" description="Urease accessory protein UreG">
    <location>
        <begin position="1"/>
        <end position="204"/>
    </location>
</feature>
<feature type="binding site" evidence="1">
    <location>
        <begin position="12"/>
        <end position="19"/>
    </location>
    <ligand>
        <name>GTP</name>
        <dbReference type="ChEBI" id="CHEBI:37565"/>
    </ligand>
</feature>
<evidence type="ECO:0000255" key="1">
    <source>
        <dbReference type="HAMAP-Rule" id="MF_01389"/>
    </source>
</evidence>
<sequence>MTSQPLRVGIGGPVGSGKTALTLALCRELRERYNLAVVTNDIYTQEDAEFLVRNEALAPERIIGVETGGCPHTAIREDASINLEAVDQLNRRFPGLELILVESGGDNLSATFSPELSDLTLYVIDVSAGDKIPRKGGPGICKSDLLVINKIDLAPLVGASLDVMDRDARRMRGDKPFVFSNQKTGQGLDEIIAFIERQGLLTAA</sequence>